<comment type="function">
    <text evidence="1 2">Accessory component of the proton-transporting vacuolar (V)-ATPase protein pump involved in intracellular iron homeostasis. In aerobic conditions, required for intracellular iron homeostasis, thus triggering the activity of Fe(2+) prolyl hydroxylase (PHD) enzymes, and leading to HIF1A hydroxylation and subsequent proteasomal degradation. Necessary for endolysosomal acidification and lysosomal degradation (By similarity). May be involved in Golgi homeostasis (By similarity). Binds 20(S)-hydroxycholesterol (20(S)-OHC) (By similarity).</text>
</comment>
<comment type="subunit">
    <text evidence="2">Accessory component of the multisubunit proton-transporting vacuolar (V)-ATPase protein pump.</text>
</comment>
<comment type="subcellular location">
    <subcellularLocation>
        <location evidence="2">Cytoplasmic vesicle</location>
        <location evidence="2">COPI-coated vesicle membrane</location>
        <topology evidence="3">Multi-pass membrane protein</topology>
    </subcellularLocation>
    <subcellularLocation>
        <location evidence="2">Endoplasmic reticulum-Golgi intermediate compartment membrane</location>
        <topology evidence="3">Multi-pass membrane protein</topology>
    </subcellularLocation>
    <subcellularLocation>
        <location evidence="2">Endoplasmic reticulum membrane</location>
        <topology evidence="3">Multi-pass membrane protein</topology>
    </subcellularLocation>
    <text evidence="2">Partial colocalization with GOLGB1.</text>
</comment>
<reference key="1">
    <citation type="journal article" date="2004" name="Genome Res.">
        <title>The status, quality, and expansion of the NIH full-length cDNA project: the Mammalian Gene Collection (MGC).</title>
        <authorList>
            <consortium name="The MGC Project Team"/>
        </authorList>
    </citation>
    <scope>NUCLEOTIDE SEQUENCE [LARGE SCALE MRNA]</scope>
    <source>
        <tissue>Spleen</tissue>
    </source>
</reference>
<organism>
    <name type="scientific">Rattus norvegicus</name>
    <name type="common">Rat</name>
    <dbReference type="NCBI Taxonomy" id="10116"/>
    <lineage>
        <taxon>Eukaryota</taxon>
        <taxon>Metazoa</taxon>
        <taxon>Chordata</taxon>
        <taxon>Craniata</taxon>
        <taxon>Vertebrata</taxon>
        <taxon>Euteleostomi</taxon>
        <taxon>Mammalia</taxon>
        <taxon>Eutheria</taxon>
        <taxon>Euarchontoglires</taxon>
        <taxon>Glires</taxon>
        <taxon>Rodentia</taxon>
        <taxon>Myomorpha</taxon>
        <taxon>Muroidea</taxon>
        <taxon>Muridae</taxon>
        <taxon>Murinae</taxon>
        <taxon>Rattus</taxon>
    </lineage>
</organism>
<accession>Q5BK13</accession>
<keyword id="KW-0007">Acetylation</keyword>
<keyword id="KW-0968">Cytoplasmic vesicle</keyword>
<keyword id="KW-0256">Endoplasmic reticulum</keyword>
<keyword id="KW-0472">Membrane</keyword>
<keyword id="KW-1185">Reference proteome</keyword>
<keyword id="KW-0812">Transmembrane</keyword>
<keyword id="KW-1133">Transmembrane helix</keyword>
<gene>
    <name type="primary">Vma12</name>
    <name type="synonym">Tmem199</name>
</gene>
<name>VMA12_RAT</name>
<protein>
    <recommendedName>
        <fullName>Vacuolar ATPase assembly protein VMA12</fullName>
    </recommendedName>
    <alternativeName>
        <fullName>Transmembrane protein 199</fullName>
    </alternativeName>
</protein>
<proteinExistence type="evidence at transcript level"/>
<feature type="initiator methionine" description="Removed" evidence="2">
    <location>
        <position position="1"/>
    </location>
</feature>
<feature type="chain" id="PRO_0000079301" description="Vacuolar ATPase assembly protein VMA12">
    <location>
        <begin position="2"/>
        <end position="208"/>
    </location>
</feature>
<feature type="transmembrane region" description="Helical" evidence="3">
    <location>
        <begin position="146"/>
        <end position="166"/>
    </location>
</feature>
<feature type="transmembrane region" description="Helical" evidence="3">
    <location>
        <begin position="179"/>
        <end position="199"/>
    </location>
</feature>
<feature type="modified residue" description="N-acetylalanine" evidence="2">
    <location>
        <position position="2"/>
    </location>
</feature>
<dbReference type="EMBL" id="BC091246">
    <property type="protein sequence ID" value="AAH91246.1"/>
    <property type="molecule type" value="mRNA"/>
</dbReference>
<dbReference type="RefSeq" id="NP_001020163.1">
    <property type="nucleotide sequence ID" value="NM_001024992.1"/>
</dbReference>
<dbReference type="FunCoup" id="Q5BK13">
    <property type="interactions" value="3446"/>
</dbReference>
<dbReference type="STRING" id="10116.ENSRNOP00000013220"/>
<dbReference type="PhosphoSitePlus" id="Q5BK13"/>
<dbReference type="PaxDb" id="10116-ENSRNOP00000013220"/>
<dbReference type="GeneID" id="303332"/>
<dbReference type="KEGG" id="rno:303332"/>
<dbReference type="AGR" id="RGD:1566425"/>
<dbReference type="CTD" id="195040"/>
<dbReference type="RGD" id="1566425">
    <property type="gene designation" value="Tmem199"/>
</dbReference>
<dbReference type="VEuPathDB" id="HostDB:ENSRNOG00000009896"/>
<dbReference type="eggNOG" id="ENOG502RXKD">
    <property type="taxonomic scope" value="Eukaryota"/>
</dbReference>
<dbReference type="HOGENOM" id="CLU_114590_0_0_1"/>
<dbReference type="InParanoid" id="Q5BK13"/>
<dbReference type="OrthoDB" id="51690at9989"/>
<dbReference type="PhylomeDB" id="Q5BK13"/>
<dbReference type="TreeFam" id="TF314610"/>
<dbReference type="PRO" id="PR:Q5BK13"/>
<dbReference type="Proteomes" id="UP000002494">
    <property type="component" value="Chromosome 10"/>
</dbReference>
<dbReference type="Bgee" id="ENSRNOG00000009896">
    <property type="expression patterns" value="Expressed in quadriceps femoris and 20 other cell types or tissues"/>
</dbReference>
<dbReference type="GO" id="GO:0030663">
    <property type="term" value="C:COPI-coated vesicle membrane"/>
    <property type="evidence" value="ECO:0000250"/>
    <property type="project" value="UniProtKB"/>
</dbReference>
<dbReference type="GO" id="GO:0012505">
    <property type="term" value="C:endomembrane system"/>
    <property type="evidence" value="ECO:0000318"/>
    <property type="project" value="GO_Central"/>
</dbReference>
<dbReference type="GO" id="GO:0005783">
    <property type="term" value="C:endoplasmic reticulum"/>
    <property type="evidence" value="ECO:0000250"/>
    <property type="project" value="UniProtKB"/>
</dbReference>
<dbReference type="GO" id="GO:0005789">
    <property type="term" value="C:endoplasmic reticulum membrane"/>
    <property type="evidence" value="ECO:0007669"/>
    <property type="project" value="UniProtKB-SubCell"/>
</dbReference>
<dbReference type="GO" id="GO:0033116">
    <property type="term" value="C:endoplasmic reticulum-Golgi intermediate compartment membrane"/>
    <property type="evidence" value="ECO:0000250"/>
    <property type="project" value="UniProtKB"/>
</dbReference>
<dbReference type="GO" id="GO:0005764">
    <property type="term" value="C:lysosome"/>
    <property type="evidence" value="ECO:0007669"/>
    <property type="project" value="GOC"/>
</dbReference>
<dbReference type="GO" id="GO:0016471">
    <property type="term" value="C:vacuolar proton-transporting V-type ATPase complex"/>
    <property type="evidence" value="ECO:0000250"/>
    <property type="project" value="UniProtKB"/>
</dbReference>
<dbReference type="GO" id="GO:0008142">
    <property type="term" value="F:oxysterol binding"/>
    <property type="evidence" value="ECO:0000250"/>
    <property type="project" value="UniProtKB"/>
</dbReference>
<dbReference type="GO" id="GO:0036295">
    <property type="term" value="P:cellular response to increased oxygen levels"/>
    <property type="evidence" value="ECO:0000250"/>
    <property type="project" value="UniProtKB"/>
</dbReference>
<dbReference type="GO" id="GO:0006879">
    <property type="term" value="P:intracellular iron ion homeostasis"/>
    <property type="evidence" value="ECO:0000250"/>
    <property type="project" value="UniProtKB"/>
</dbReference>
<dbReference type="GO" id="GO:0007042">
    <property type="term" value="P:lysosomal lumen acidification"/>
    <property type="evidence" value="ECO:0000250"/>
    <property type="project" value="UniProtKB"/>
</dbReference>
<dbReference type="GO" id="GO:1905146">
    <property type="term" value="P:lysosomal protein catabolic process"/>
    <property type="evidence" value="ECO:0000250"/>
    <property type="project" value="UniProtKB"/>
</dbReference>
<dbReference type="GO" id="GO:0070072">
    <property type="term" value="P:vacuolar proton-transporting V-type ATPase complex assembly"/>
    <property type="evidence" value="ECO:0007669"/>
    <property type="project" value="InterPro"/>
</dbReference>
<dbReference type="InterPro" id="IPR021013">
    <property type="entry name" value="ATPase_Vma12"/>
</dbReference>
<dbReference type="PANTHER" id="PTHR31394">
    <property type="entry name" value="TRANSMEMBRANE PROTEIN 199"/>
    <property type="match status" value="1"/>
</dbReference>
<dbReference type="PANTHER" id="PTHR31394:SF1">
    <property type="entry name" value="TRANSMEMBRANE PROTEIN 199"/>
    <property type="match status" value="1"/>
</dbReference>
<dbReference type="Pfam" id="PF11712">
    <property type="entry name" value="Vma12"/>
    <property type="match status" value="1"/>
</dbReference>
<evidence type="ECO:0000250" key="1">
    <source>
        <dbReference type="UniProtKB" id="Q5SYH2"/>
    </source>
</evidence>
<evidence type="ECO:0000250" key="2">
    <source>
        <dbReference type="UniProtKB" id="Q8N511"/>
    </source>
</evidence>
<evidence type="ECO:0000255" key="3"/>
<sequence>MASSLLAGERLVRALDPGGELEREQLPRKLRAQLEAALGKKHAGSDNATGPRRLVSFRLIRDLHQHLRERNSMLYLHELLEGSEIYFPEIVKPPRNPELVARLEKIKIQLANEEYKRITRNVTCQDAQCGGTLSDLGKQVRSVKALVITIFNFIVTVAAAFVCTYLGSQYIFTEMASRVLAALIVASVVGLAELYVMVRAMEGELGEL</sequence>